<keyword id="KW-0167">Capsid protein</keyword>
<keyword id="KW-1139">Helical capsid protein</keyword>
<keyword id="KW-1035">Host cytoplasm</keyword>
<keyword id="KW-0687">Ribonucleoprotein</keyword>
<keyword id="KW-0694">RNA-binding</keyword>
<keyword id="KW-0543">Viral nucleoprotein</keyword>
<keyword id="KW-0946">Virion</keyword>
<reference key="1">
    <citation type="journal article" date="1990" name="J. Gen. Virol.">
        <title>The sequence of the nucleocapsid protein (N) gene of Piry virus: possible domains in the N protein of vesiculoviruses.</title>
        <authorList>
            <person name="Crysler J.G."/>
            <person name="Lee P."/>
            <person name="Reinders M."/>
            <person name="Prevec L."/>
        </authorList>
    </citation>
    <scope>NUCLEOTIDE SEQUENCE [GENOMIC RNA] OF 7-427</scope>
</reference>
<reference key="2">
    <citation type="journal article" date="1987" name="J. Virol.">
        <title>Genome RNA terminus conservation and diversity among vesiculoviruses.</title>
        <authorList>
            <person name="Nichol S.T."/>
            <person name="Holland J.J."/>
        </authorList>
    </citation>
    <scope>PRELIMINARY NUCLEOTIDE SEQUENCE [GENOMIC RNA] OF 1-60</scope>
</reference>
<organism>
    <name type="scientific">Piry virus</name>
    <name type="common">PIRYV</name>
    <dbReference type="NCBI Taxonomy" id="11274"/>
    <lineage>
        <taxon>Viruses</taxon>
        <taxon>Riboviria</taxon>
        <taxon>Orthornavirae</taxon>
        <taxon>Negarnaviricota</taxon>
        <taxon>Haploviricotina</taxon>
        <taxon>Monjiviricetes</taxon>
        <taxon>Mononegavirales</taxon>
        <taxon>Rhabdoviridae</taxon>
        <taxon>Alpharhabdovirinae</taxon>
        <taxon>Vesiculovirus</taxon>
        <taxon>Vesiculovirus piry</taxon>
    </lineage>
</organism>
<sequence length="427" mass="48435">MSVSVKRISTGTQVVAALPASEDPVEFPAEYFAKNPGKIPVFISTRLDLDKLRQYVYMGLTTGEVNVCHINSYLYRVLQNIEDEARDNWVSFRVTIAAKDTTVRLFDMLEVKEYAGLVPDGKENANLTQTVDEWLPMYILGLQRVGRATDERYRGDLYDHLCAQCKLKSPSFESLGNPADNNYASWINDSNFLKLVAAIDMFFHHFKKHEEAVIRFGTITSRFKDCAALSTMAHLVKVTGMPVEEVMTWVLNKPVEDEVCRMMTPGQEIDKADSYMPYLIDFGLSTKSPYSSVKNPCFHFWGQLTAVLVNSARARNARVPDDIPYQELTQAALLFAYATGRSSDLAQRFVLHNKEYIKAAPDASDNSEREESKEAPTTRDVVEWLAWWDDIGQVRTRDMEVFARRAVHGILDPREKSIGAYARGYFA</sequence>
<name>NCAP_PIRYV</name>
<gene>
    <name type="primary">N</name>
</gene>
<evidence type="ECO:0000250" key="1">
    <source>
        <dbReference type="UniProtKB" id="P03521"/>
    </source>
</evidence>
<evidence type="ECO:0000305" key="2"/>
<comment type="function">
    <text evidence="1">Encapsidates the genome in a ratio of one N per nine ribonucleotides, protecting it from nucleases. The encapsidated genomic RNA is termed the NC and serves as template for transcription and replication. The nucleocapsid is bullet-shaped with the tip containing 8 turns of a conical spiral before reaching the helical cylindrical trunk. Nucleocapsid assembly is concomitant with replication, therefore viral replication depends on the intracellular concentration of free N, termed N(0). All replicative products are resistant to nucleases.</text>
</comment>
<comment type="subunit">
    <text evidence="1">Homomultimerizes to form the nucleocapsid. Binds to viral genomic RNA; this interaction contributes to the virion assembly. N in the nucleocapsid interacts (via C-terminus) with the P protein (via C-terminus); this interaction allows to package the L polymerase in the virion and positions the polymerase on the template, since P acts as a bridge between N and L. N(0) interacts with the P protein; this interaction prevents the uncontrolled aggregation of N(0). Interacts with the matrix protein (inner layer); this interaction contributes to the virion assembly. Interacts with the L polymerase.</text>
</comment>
<comment type="subcellular location">
    <subcellularLocation>
        <location evidence="1">Virion</location>
    </subcellularLocation>
    <subcellularLocation>
        <location evidence="1">Host cytoplasm</location>
    </subcellularLocation>
    <text evidence="1">The nucleocapsid is synthesized in the cytoplasm, and is subsequently transported via microtubules to the cell periphery. About 1240 copies of N are present in the virion.</text>
</comment>
<comment type="similarity">
    <text evidence="2">Belongs to the vesiculovirus nucleocapsid protein family.</text>
</comment>
<organismHost>
    <name type="scientific">Gracilinanus microtarsus</name>
    <name type="common">Brazilian gracile mouse opossum</name>
    <dbReference type="NCBI Taxonomy" id="126289"/>
</organismHost>
<protein>
    <recommendedName>
        <fullName>Nucleoprotein</fullName>
        <shortName>NP</shortName>
    </recommendedName>
    <alternativeName>
        <fullName>Nucleocapsid protein</fullName>
        <shortName>Protein N</shortName>
    </alternativeName>
</protein>
<accession>P26037</accession>
<proteinExistence type="inferred from homology"/>
<dbReference type="EMBL" id="M14714">
    <property type="protein sequence ID" value="AAA48454.1"/>
    <property type="status" value="ALT_SEQ"/>
    <property type="molecule type" value="Genomic_RNA"/>
</dbReference>
<dbReference type="PIR" id="A36643">
    <property type="entry name" value="VHVNPV"/>
</dbReference>
<dbReference type="SMR" id="P26037"/>
<dbReference type="OrthoDB" id="22890at10239"/>
<dbReference type="GO" id="GO:0019029">
    <property type="term" value="C:helical viral capsid"/>
    <property type="evidence" value="ECO:0007669"/>
    <property type="project" value="UniProtKB-KW"/>
</dbReference>
<dbReference type="GO" id="GO:0030430">
    <property type="term" value="C:host cell cytoplasm"/>
    <property type="evidence" value="ECO:0007669"/>
    <property type="project" value="UniProtKB-SubCell"/>
</dbReference>
<dbReference type="GO" id="GO:1990904">
    <property type="term" value="C:ribonucleoprotein complex"/>
    <property type="evidence" value="ECO:0007669"/>
    <property type="project" value="UniProtKB-KW"/>
</dbReference>
<dbReference type="GO" id="GO:0019013">
    <property type="term" value="C:viral nucleocapsid"/>
    <property type="evidence" value="ECO:0007669"/>
    <property type="project" value="UniProtKB-KW"/>
</dbReference>
<dbReference type="GO" id="GO:0003723">
    <property type="term" value="F:RNA binding"/>
    <property type="evidence" value="ECO:0007669"/>
    <property type="project" value="UniProtKB-KW"/>
</dbReference>
<dbReference type="Gene3D" id="1.10.3610.10">
    <property type="entry name" value="Nucleoprotein"/>
    <property type="match status" value="1"/>
</dbReference>
<dbReference type="Gene3D" id="1.10.3570.10">
    <property type="entry name" value="Rhabdovirus nucleocapsid protein like domain"/>
    <property type="match status" value="1"/>
</dbReference>
<dbReference type="InterPro" id="IPR000448">
    <property type="entry name" value="Rhabdo_ncapsid"/>
</dbReference>
<dbReference type="InterPro" id="IPR023331">
    <property type="entry name" value="Rhabdovirus_ncapsid_C"/>
</dbReference>
<dbReference type="InterPro" id="IPR023330">
    <property type="entry name" value="Rhabdovirus_ncapsid_N"/>
</dbReference>
<dbReference type="InterPro" id="IPR035961">
    <property type="entry name" value="Rhabdovirus_nucleoprotein-like"/>
</dbReference>
<dbReference type="Pfam" id="PF00945">
    <property type="entry name" value="Rhabdo_ncap"/>
    <property type="match status" value="1"/>
</dbReference>
<dbReference type="SUPFAM" id="SSF140809">
    <property type="entry name" value="Rhabdovirus nucleoprotein-like"/>
    <property type="match status" value="1"/>
</dbReference>
<feature type="chain" id="PRO_0000222812" description="Nucleoprotein">
    <location>
        <begin position="1"/>
        <end position="427"/>
    </location>
</feature>
<feature type="region of interest" description="Interaction with the phosphoprotein" evidence="1">
    <location>
        <begin position="351"/>
        <end position="396"/>
    </location>
</feature>
<feature type="binding site" evidence="1">
    <location>
        <position position="144"/>
    </location>
    <ligand>
        <name>RNA</name>
        <dbReference type="ChEBI" id="CHEBI:33697"/>
    </ligand>
</feature>
<feature type="binding site" evidence="1">
    <location>
        <position position="153"/>
    </location>
    <ligand>
        <name>RNA</name>
        <dbReference type="ChEBI" id="CHEBI:33697"/>
    </ligand>
</feature>
<feature type="binding site" evidence="1">
    <location>
        <position position="207"/>
    </location>
    <ligand>
        <name>RNA</name>
        <dbReference type="ChEBI" id="CHEBI:33697"/>
    </ligand>
</feature>
<feature type="binding site" evidence="1">
    <location>
        <position position="215"/>
    </location>
    <ligand>
        <name>RNA</name>
        <dbReference type="ChEBI" id="CHEBI:33697"/>
    </ligand>
</feature>
<feature type="binding site" evidence="1">
    <location>
        <position position="287"/>
    </location>
    <ligand>
        <name>RNA</name>
        <dbReference type="ChEBI" id="CHEBI:33697"/>
    </ligand>
</feature>
<feature type="binding site" evidence="1">
    <location>
        <position position="318"/>
    </location>
    <ligand>
        <name>RNA</name>
        <dbReference type="ChEBI" id="CHEBI:33697"/>
    </ligand>
</feature>
<feature type="binding site" evidence="1">
    <location>
        <position position="414"/>
    </location>
    <ligand>
        <name>RNA</name>
        <dbReference type="ChEBI" id="CHEBI:33697"/>
    </ligand>
</feature>